<feature type="chain" id="PRO_0000162311" description="Small, acid-soluble spore protein H 2">
    <location>
        <begin position="1"/>
        <end position="59"/>
    </location>
</feature>
<evidence type="ECO:0000250" key="1"/>
<evidence type="ECO:0000305" key="2"/>
<accession>Q81SD1</accession>
<accession>Q6KUH6</accession>
<sequence>MNIQRAKELSVSAEQANVSFQGMPVMIQHVDESNETARIYEVKNPGRELTVPVNSLEEI</sequence>
<reference key="1">
    <citation type="journal article" date="2003" name="Nature">
        <title>The genome sequence of Bacillus anthracis Ames and comparison to closely related bacteria.</title>
        <authorList>
            <person name="Read T.D."/>
            <person name="Peterson S.N."/>
            <person name="Tourasse N.J."/>
            <person name="Baillie L.W."/>
            <person name="Paulsen I.T."/>
            <person name="Nelson K.E."/>
            <person name="Tettelin H."/>
            <person name="Fouts D.E."/>
            <person name="Eisen J.A."/>
            <person name="Gill S.R."/>
            <person name="Holtzapple E.K."/>
            <person name="Okstad O.A."/>
            <person name="Helgason E."/>
            <person name="Rilstone J."/>
            <person name="Wu M."/>
            <person name="Kolonay J.F."/>
            <person name="Beanan M.J."/>
            <person name="Dodson R.J."/>
            <person name="Brinkac L.M."/>
            <person name="Gwinn M.L."/>
            <person name="DeBoy R.T."/>
            <person name="Madpu R."/>
            <person name="Daugherty S.C."/>
            <person name="Durkin A.S."/>
            <person name="Haft D.H."/>
            <person name="Nelson W.C."/>
            <person name="Peterson J.D."/>
            <person name="Pop M."/>
            <person name="Khouri H.M."/>
            <person name="Radune D."/>
            <person name="Benton J.L."/>
            <person name="Mahamoud Y."/>
            <person name="Jiang L."/>
            <person name="Hance I.R."/>
            <person name="Weidman J.F."/>
            <person name="Berry K.J."/>
            <person name="Plaut R.D."/>
            <person name="Wolf A.M."/>
            <person name="Watkins K.L."/>
            <person name="Nierman W.C."/>
            <person name="Hazen A."/>
            <person name="Cline R.T."/>
            <person name="Redmond C."/>
            <person name="Thwaite J.E."/>
            <person name="White O."/>
            <person name="Salzberg S.L."/>
            <person name="Thomason B."/>
            <person name="Friedlander A.M."/>
            <person name="Koehler T.M."/>
            <person name="Hanna P.C."/>
            <person name="Kolstoe A.-B."/>
            <person name="Fraser C.M."/>
        </authorList>
    </citation>
    <scope>NUCLEOTIDE SEQUENCE [LARGE SCALE GENOMIC DNA]</scope>
    <source>
        <strain>Ames / isolate Porton</strain>
    </source>
</reference>
<reference key="2">
    <citation type="journal article" date="2009" name="J. Bacteriol.">
        <title>The complete genome sequence of Bacillus anthracis Ames 'Ancestor'.</title>
        <authorList>
            <person name="Ravel J."/>
            <person name="Jiang L."/>
            <person name="Stanley S.T."/>
            <person name="Wilson M.R."/>
            <person name="Decker R.S."/>
            <person name="Read T.D."/>
            <person name="Worsham P."/>
            <person name="Keim P.S."/>
            <person name="Salzberg S.L."/>
            <person name="Fraser-Liggett C.M."/>
            <person name="Rasko D.A."/>
        </authorList>
    </citation>
    <scope>NUCLEOTIDE SEQUENCE [LARGE SCALE GENOMIC DNA]</scope>
    <source>
        <strain>Ames ancestor</strain>
    </source>
</reference>
<reference key="3">
    <citation type="submission" date="2004-01" db="EMBL/GenBank/DDBJ databases">
        <title>Complete genome sequence of Bacillus anthracis Sterne.</title>
        <authorList>
            <person name="Brettin T.S."/>
            <person name="Bruce D."/>
            <person name="Challacombe J.F."/>
            <person name="Gilna P."/>
            <person name="Han C."/>
            <person name="Hill K."/>
            <person name="Hitchcock P."/>
            <person name="Jackson P."/>
            <person name="Keim P."/>
            <person name="Longmire J."/>
            <person name="Lucas S."/>
            <person name="Okinaka R."/>
            <person name="Richardson P."/>
            <person name="Rubin E."/>
            <person name="Tice H."/>
        </authorList>
    </citation>
    <scope>NUCLEOTIDE SEQUENCE [LARGE SCALE GENOMIC DNA]</scope>
    <source>
        <strain>Sterne</strain>
    </source>
</reference>
<proteinExistence type="inferred from homology"/>
<protein>
    <recommendedName>
        <fullName>Small, acid-soluble spore protein H 2</fullName>
        <shortName>SASP H 2</shortName>
    </recommendedName>
</protein>
<dbReference type="EMBL" id="AE016879">
    <property type="protein sequence ID" value="AAP25650.1"/>
    <property type="molecule type" value="Genomic_DNA"/>
</dbReference>
<dbReference type="EMBL" id="AE017334">
    <property type="protein sequence ID" value="AAT30844.1"/>
    <property type="molecule type" value="Genomic_DNA"/>
</dbReference>
<dbReference type="EMBL" id="AE017225">
    <property type="status" value="NOT_ANNOTATED_CDS"/>
    <property type="molecule type" value="Genomic_DNA"/>
</dbReference>
<dbReference type="RefSeq" id="NP_844164.1">
    <property type="nucleotide sequence ID" value="NC_003997.3"/>
</dbReference>
<dbReference type="RefSeq" id="WP_001025740.1">
    <property type="nucleotide sequence ID" value="NZ_WXXJ01000017.1"/>
</dbReference>
<dbReference type="STRING" id="261594.GBAA_1729"/>
<dbReference type="DNASU" id="1086835"/>
<dbReference type="KEGG" id="ban:BA_1729"/>
<dbReference type="KEGG" id="bar:GBAA_1729"/>
<dbReference type="PATRIC" id="fig|198094.11.peg.1704"/>
<dbReference type="HOGENOM" id="CLU_191960_2_1_9"/>
<dbReference type="OMA" id="MNTQRAK"/>
<dbReference type="OrthoDB" id="1683648at2"/>
<dbReference type="Proteomes" id="UP000000427">
    <property type="component" value="Chromosome"/>
</dbReference>
<dbReference type="Proteomes" id="UP000000594">
    <property type="component" value="Chromosome"/>
</dbReference>
<dbReference type="GO" id="GO:0042601">
    <property type="term" value="C:endospore-forming forespore"/>
    <property type="evidence" value="ECO:0007669"/>
    <property type="project" value="InterPro"/>
</dbReference>
<dbReference type="GO" id="GO:0030436">
    <property type="term" value="P:asexual sporulation"/>
    <property type="evidence" value="ECO:0007669"/>
    <property type="project" value="UniProtKB-UniRule"/>
</dbReference>
<dbReference type="GO" id="GO:0030435">
    <property type="term" value="P:sporulation resulting in formation of a cellular spore"/>
    <property type="evidence" value="ECO:0007669"/>
    <property type="project" value="UniProtKB-KW"/>
</dbReference>
<dbReference type="HAMAP" id="MF_00667">
    <property type="entry name" value="SspH"/>
    <property type="match status" value="1"/>
</dbReference>
<dbReference type="InterPro" id="IPR012610">
    <property type="entry name" value="SASP_SspH"/>
</dbReference>
<dbReference type="NCBIfam" id="TIGR02861">
    <property type="entry name" value="SASP_H"/>
    <property type="match status" value="1"/>
</dbReference>
<dbReference type="Pfam" id="PF08141">
    <property type="entry name" value="SspH"/>
    <property type="match status" value="1"/>
</dbReference>
<organism>
    <name type="scientific">Bacillus anthracis</name>
    <dbReference type="NCBI Taxonomy" id="1392"/>
    <lineage>
        <taxon>Bacteria</taxon>
        <taxon>Bacillati</taxon>
        <taxon>Bacillota</taxon>
        <taxon>Bacilli</taxon>
        <taxon>Bacillales</taxon>
        <taxon>Bacillaceae</taxon>
        <taxon>Bacillus</taxon>
        <taxon>Bacillus cereus group</taxon>
    </lineage>
</organism>
<gene>
    <name type="primary">sspH2</name>
    <name type="ordered locus">BA_1729</name>
    <name type="ordered locus">GBAA_1729</name>
    <name type="ordered locus">BAS1605.1</name>
</gene>
<comment type="subcellular location">
    <subcellularLocation>
        <location evidence="1">Spore core</location>
    </subcellularLocation>
</comment>
<comment type="induction">
    <text evidence="1">Expressed only in the forespore compartment of sporulating cells.</text>
</comment>
<comment type="similarity">
    <text evidence="2">Belongs to the SspH family.</text>
</comment>
<keyword id="KW-1185">Reference proteome</keyword>
<keyword id="KW-0749">Sporulation</keyword>
<name>SSPH2_BACAN</name>